<sequence>MSLYAPIAAIATAPGRGGIGVVRISGPDLAELAQRLFGRPLTPRHAHYLPFRAADGEVIDEGLAIYFRAPHSYTGEDVLELQGHGGPAVLRRILARCLQAGHDLGLRPAEPGEFTRRAFLNERLDLAQAEAVADLIDASSEAAARGAMTSLSGEFSQRVNDLSDRIIHLRMLVEATLDFPEEEIDFLEKYQARPTLQALTHDLDTLIAQARQGVILREGLHVVLAGKPNVGKSSLLNALAGDDIAIVTPIAGTTRDKVVQEIHIDGVPLHIVDTAGLRDTDDAVESIGIERTWKEIERADLILHLQDVTQPPDHLDAQIVRRLPARTPVLNVFNKVDLLDAAFQGQPDSLAISARGGIGLDALRQRLLQLAGWNPGAESPWLARERHLHALQQAAQHLEIATEHAREDDRVLDLFAEELRLAHEALTGITGKFTSDDLLGEIFSSFCIGK</sequence>
<proteinExistence type="inferred from homology"/>
<organism>
    <name type="scientific">Bordetella bronchiseptica (strain ATCC BAA-588 / NCTC 13252 / RB50)</name>
    <name type="common">Alcaligenes bronchisepticus</name>
    <dbReference type="NCBI Taxonomy" id="257310"/>
    <lineage>
        <taxon>Bacteria</taxon>
        <taxon>Pseudomonadati</taxon>
        <taxon>Pseudomonadota</taxon>
        <taxon>Betaproteobacteria</taxon>
        <taxon>Burkholderiales</taxon>
        <taxon>Alcaligenaceae</taxon>
        <taxon>Bordetella</taxon>
    </lineage>
</organism>
<comment type="function">
    <text evidence="1">Exhibits a very high intrinsic GTPase hydrolysis rate. Involved in the addition of a carboxymethylaminomethyl (cmnm) group at the wobble position (U34) of certain tRNAs, forming tRNA-cmnm(5)s(2)U34.</text>
</comment>
<comment type="cofactor">
    <cofactor evidence="1">
        <name>K(+)</name>
        <dbReference type="ChEBI" id="CHEBI:29103"/>
    </cofactor>
    <text evidence="1">Binds 1 potassium ion per subunit.</text>
</comment>
<comment type="subunit">
    <text evidence="1">Homodimer. Heterotetramer of two MnmE and two MnmG subunits.</text>
</comment>
<comment type="subcellular location">
    <subcellularLocation>
        <location evidence="1">Cytoplasm</location>
    </subcellularLocation>
</comment>
<comment type="similarity">
    <text evidence="1">Belongs to the TRAFAC class TrmE-Era-EngA-EngB-Septin-like GTPase superfamily. TrmE GTPase family.</text>
</comment>
<reference key="1">
    <citation type="journal article" date="2003" name="Nat. Genet.">
        <title>Comparative analysis of the genome sequences of Bordetella pertussis, Bordetella parapertussis and Bordetella bronchiseptica.</title>
        <authorList>
            <person name="Parkhill J."/>
            <person name="Sebaihia M."/>
            <person name="Preston A."/>
            <person name="Murphy L.D."/>
            <person name="Thomson N.R."/>
            <person name="Harris D.E."/>
            <person name="Holden M.T.G."/>
            <person name="Churcher C.M."/>
            <person name="Bentley S.D."/>
            <person name="Mungall K.L."/>
            <person name="Cerdeno-Tarraga A.-M."/>
            <person name="Temple L."/>
            <person name="James K.D."/>
            <person name="Harris B."/>
            <person name="Quail M.A."/>
            <person name="Achtman M."/>
            <person name="Atkin R."/>
            <person name="Baker S."/>
            <person name="Basham D."/>
            <person name="Bason N."/>
            <person name="Cherevach I."/>
            <person name="Chillingworth T."/>
            <person name="Collins M."/>
            <person name="Cronin A."/>
            <person name="Davis P."/>
            <person name="Doggett J."/>
            <person name="Feltwell T."/>
            <person name="Goble A."/>
            <person name="Hamlin N."/>
            <person name="Hauser H."/>
            <person name="Holroyd S."/>
            <person name="Jagels K."/>
            <person name="Leather S."/>
            <person name="Moule S."/>
            <person name="Norberczak H."/>
            <person name="O'Neil S."/>
            <person name="Ormond D."/>
            <person name="Price C."/>
            <person name="Rabbinowitsch E."/>
            <person name="Rutter S."/>
            <person name="Sanders M."/>
            <person name="Saunders D."/>
            <person name="Seeger K."/>
            <person name="Sharp S."/>
            <person name="Simmonds M."/>
            <person name="Skelton J."/>
            <person name="Squares R."/>
            <person name="Squares S."/>
            <person name="Stevens K."/>
            <person name="Unwin L."/>
            <person name="Whitehead S."/>
            <person name="Barrell B.G."/>
            <person name="Maskell D.J."/>
        </authorList>
    </citation>
    <scope>NUCLEOTIDE SEQUENCE [LARGE SCALE GENOMIC DNA]</scope>
    <source>
        <strain>ATCC BAA-588 / NCTC 13252 / RB50</strain>
    </source>
</reference>
<protein>
    <recommendedName>
        <fullName evidence="1">tRNA modification GTPase MnmE</fullName>
        <ecNumber evidence="1">3.6.-.-</ecNumber>
    </recommendedName>
</protein>
<feature type="chain" id="PRO_0000188852" description="tRNA modification GTPase MnmE">
    <location>
        <begin position="1"/>
        <end position="450"/>
    </location>
</feature>
<feature type="domain" description="TrmE-type G">
    <location>
        <begin position="219"/>
        <end position="372"/>
    </location>
</feature>
<feature type="binding site" evidence="1">
    <location>
        <position position="23"/>
    </location>
    <ligand>
        <name>(6S)-5-formyl-5,6,7,8-tetrahydrofolate</name>
        <dbReference type="ChEBI" id="CHEBI:57457"/>
    </ligand>
</feature>
<feature type="binding site" evidence="1">
    <location>
        <position position="80"/>
    </location>
    <ligand>
        <name>(6S)-5-formyl-5,6,7,8-tetrahydrofolate</name>
        <dbReference type="ChEBI" id="CHEBI:57457"/>
    </ligand>
</feature>
<feature type="binding site" evidence="1">
    <location>
        <position position="123"/>
    </location>
    <ligand>
        <name>(6S)-5-formyl-5,6,7,8-tetrahydrofolate</name>
        <dbReference type="ChEBI" id="CHEBI:57457"/>
    </ligand>
</feature>
<feature type="binding site" evidence="1">
    <location>
        <begin position="229"/>
        <end position="234"/>
    </location>
    <ligand>
        <name>GTP</name>
        <dbReference type="ChEBI" id="CHEBI:37565"/>
    </ligand>
</feature>
<feature type="binding site" evidence="1">
    <location>
        <position position="229"/>
    </location>
    <ligand>
        <name>K(+)</name>
        <dbReference type="ChEBI" id="CHEBI:29103"/>
    </ligand>
</feature>
<feature type="binding site" evidence="1">
    <location>
        <position position="233"/>
    </location>
    <ligand>
        <name>Mg(2+)</name>
        <dbReference type="ChEBI" id="CHEBI:18420"/>
    </ligand>
</feature>
<feature type="binding site" evidence="1">
    <location>
        <begin position="248"/>
        <end position="254"/>
    </location>
    <ligand>
        <name>GTP</name>
        <dbReference type="ChEBI" id="CHEBI:37565"/>
    </ligand>
</feature>
<feature type="binding site" evidence="1">
    <location>
        <position position="248"/>
    </location>
    <ligand>
        <name>K(+)</name>
        <dbReference type="ChEBI" id="CHEBI:29103"/>
    </ligand>
</feature>
<feature type="binding site" evidence="1">
    <location>
        <position position="250"/>
    </location>
    <ligand>
        <name>K(+)</name>
        <dbReference type="ChEBI" id="CHEBI:29103"/>
    </ligand>
</feature>
<feature type="binding site" evidence="1">
    <location>
        <position position="253"/>
    </location>
    <ligand>
        <name>K(+)</name>
        <dbReference type="ChEBI" id="CHEBI:29103"/>
    </ligand>
</feature>
<feature type="binding site" evidence="1">
    <location>
        <position position="254"/>
    </location>
    <ligand>
        <name>Mg(2+)</name>
        <dbReference type="ChEBI" id="CHEBI:18420"/>
    </ligand>
</feature>
<feature type="binding site" evidence="1">
    <location>
        <begin position="273"/>
        <end position="276"/>
    </location>
    <ligand>
        <name>GTP</name>
        <dbReference type="ChEBI" id="CHEBI:37565"/>
    </ligand>
</feature>
<feature type="binding site" evidence="1">
    <location>
        <begin position="353"/>
        <end position="355"/>
    </location>
    <ligand>
        <name>GTP</name>
        <dbReference type="ChEBI" id="CHEBI:37565"/>
    </ligand>
</feature>
<feature type="binding site" evidence="1">
    <location>
        <position position="450"/>
    </location>
    <ligand>
        <name>(6S)-5-formyl-5,6,7,8-tetrahydrofolate</name>
        <dbReference type="ChEBI" id="CHEBI:57457"/>
    </ligand>
</feature>
<keyword id="KW-0963">Cytoplasm</keyword>
<keyword id="KW-0342">GTP-binding</keyword>
<keyword id="KW-0378">Hydrolase</keyword>
<keyword id="KW-0460">Magnesium</keyword>
<keyword id="KW-0479">Metal-binding</keyword>
<keyword id="KW-0547">Nucleotide-binding</keyword>
<keyword id="KW-0630">Potassium</keyword>
<keyword id="KW-0819">tRNA processing</keyword>
<evidence type="ECO:0000255" key="1">
    <source>
        <dbReference type="HAMAP-Rule" id="MF_00379"/>
    </source>
</evidence>
<accession>Q7WDI4</accession>
<dbReference type="EC" id="3.6.-.-" evidence="1"/>
<dbReference type="EMBL" id="BX640452">
    <property type="protein sequence ID" value="CAE35369.1"/>
    <property type="molecule type" value="Genomic_DNA"/>
</dbReference>
<dbReference type="RefSeq" id="WP_010927256.1">
    <property type="nucleotide sequence ID" value="NC_002927.3"/>
</dbReference>
<dbReference type="SMR" id="Q7WDI4"/>
<dbReference type="KEGG" id="bbr:BB5005"/>
<dbReference type="eggNOG" id="COG0486">
    <property type="taxonomic scope" value="Bacteria"/>
</dbReference>
<dbReference type="HOGENOM" id="CLU_019624_4_1_4"/>
<dbReference type="Proteomes" id="UP000001027">
    <property type="component" value="Chromosome"/>
</dbReference>
<dbReference type="GO" id="GO:0005829">
    <property type="term" value="C:cytosol"/>
    <property type="evidence" value="ECO:0007669"/>
    <property type="project" value="TreeGrafter"/>
</dbReference>
<dbReference type="GO" id="GO:0005525">
    <property type="term" value="F:GTP binding"/>
    <property type="evidence" value="ECO:0007669"/>
    <property type="project" value="UniProtKB-UniRule"/>
</dbReference>
<dbReference type="GO" id="GO:0003924">
    <property type="term" value="F:GTPase activity"/>
    <property type="evidence" value="ECO:0007669"/>
    <property type="project" value="UniProtKB-UniRule"/>
</dbReference>
<dbReference type="GO" id="GO:0046872">
    <property type="term" value="F:metal ion binding"/>
    <property type="evidence" value="ECO:0007669"/>
    <property type="project" value="UniProtKB-KW"/>
</dbReference>
<dbReference type="GO" id="GO:0030488">
    <property type="term" value="P:tRNA methylation"/>
    <property type="evidence" value="ECO:0007669"/>
    <property type="project" value="TreeGrafter"/>
</dbReference>
<dbReference type="GO" id="GO:0002098">
    <property type="term" value="P:tRNA wobble uridine modification"/>
    <property type="evidence" value="ECO:0007669"/>
    <property type="project" value="TreeGrafter"/>
</dbReference>
<dbReference type="CDD" id="cd04164">
    <property type="entry name" value="trmE"/>
    <property type="match status" value="1"/>
</dbReference>
<dbReference type="CDD" id="cd14858">
    <property type="entry name" value="TrmE_N"/>
    <property type="match status" value="1"/>
</dbReference>
<dbReference type="FunFam" id="3.40.50.300:FF:001376">
    <property type="entry name" value="tRNA modification GTPase MnmE"/>
    <property type="match status" value="1"/>
</dbReference>
<dbReference type="Gene3D" id="3.40.50.300">
    <property type="entry name" value="P-loop containing nucleotide triphosphate hydrolases"/>
    <property type="match status" value="1"/>
</dbReference>
<dbReference type="Gene3D" id="3.30.1360.120">
    <property type="entry name" value="Probable tRNA modification gtpase trme, domain 1"/>
    <property type="match status" value="1"/>
</dbReference>
<dbReference type="Gene3D" id="1.20.120.430">
    <property type="entry name" value="tRNA modification GTPase MnmE domain 2"/>
    <property type="match status" value="1"/>
</dbReference>
<dbReference type="HAMAP" id="MF_00379">
    <property type="entry name" value="GTPase_MnmE"/>
    <property type="match status" value="1"/>
</dbReference>
<dbReference type="InterPro" id="IPR031168">
    <property type="entry name" value="G_TrmE"/>
</dbReference>
<dbReference type="InterPro" id="IPR006073">
    <property type="entry name" value="GTP-bd"/>
</dbReference>
<dbReference type="InterPro" id="IPR018948">
    <property type="entry name" value="GTP-bd_TrmE_N"/>
</dbReference>
<dbReference type="InterPro" id="IPR004520">
    <property type="entry name" value="GTPase_MnmE"/>
</dbReference>
<dbReference type="InterPro" id="IPR027368">
    <property type="entry name" value="MnmE_dom2"/>
</dbReference>
<dbReference type="InterPro" id="IPR025867">
    <property type="entry name" value="MnmE_helical"/>
</dbReference>
<dbReference type="InterPro" id="IPR027417">
    <property type="entry name" value="P-loop_NTPase"/>
</dbReference>
<dbReference type="InterPro" id="IPR005225">
    <property type="entry name" value="Small_GTP-bd"/>
</dbReference>
<dbReference type="InterPro" id="IPR027266">
    <property type="entry name" value="TrmE/GcvT_dom1"/>
</dbReference>
<dbReference type="NCBIfam" id="TIGR00450">
    <property type="entry name" value="mnmE_trmE_thdF"/>
    <property type="match status" value="1"/>
</dbReference>
<dbReference type="NCBIfam" id="NF003661">
    <property type="entry name" value="PRK05291.1-3"/>
    <property type="match status" value="1"/>
</dbReference>
<dbReference type="NCBIfam" id="TIGR00231">
    <property type="entry name" value="small_GTP"/>
    <property type="match status" value="1"/>
</dbReference>
<dbReference type="PANTHER" id="PTHR42714">
    <property type="entry name" value="TRNA MODIFICATION GTPASE GTPBP3"/>
    <property type="match status" value="1"/>
</dbReference>
<dbReference type="PANTHER" id="PTHR42714:SF2">
    <property type="entry name" value="TRNA MODIFICATION GTPASE GTPBP3, MITOCHONDRIAL"/>
    <property type="match status" value="1"/>
</dbReference>
<dbReference type="Pfam" id="PF01926">
    <property type="entry name" value="MMR_HSR1"/>
    <property type="match status" value="1"/>
</dbReference>
<dbReference type="Pfam" id="PF12631">
    <property type="entry name" value="MnmE_helical"/>
    <property type="match status" value="1"/>
</dbReference>
<dbReference type="Pfam" id="PF10396">
    <property type="entry name" value="TrmE_N"/>
    <property type="match status" value="1"/>
</dbReference>
<dbReference type="PRINTS" id="PR00326">
    <property type="entry name" value="GTP1OBG"/>
</dbReference>
<dbReference type="SUPFAM" id="SSF52540">
    <property type="entry name" value="P-loop containing nucleoside triphosphate hydrolases"/>
    <property type="match status" value="1"/>
</dbReference>
<dbReference type="SUPFAM" id="SSF116878">
    <property type="entry name" value="TrmE connector domain"/>
    <property type="match status" value="1"/>
</dbReference>
<dbReference type="PROSITE" id="PS51709">
    <property type="entry name" value="G_TRME"/>
    <property type="match status" value="1"/>
</dbReference>
<gene>
    <name evidence="1" type="primary">mnmE</name>
    <name evidence="1" type="synonym">trmE</name>
    <name type="ordered locus">BB5005</name>
</gene>
<name>MNME_BORBR</name>